<dbReference type="EC" id="2.7.1.30" evidence="2"/>
<dbReference type="EMBL" id="AE006468">
    <property type="protein sequence ID" value="AAL22926.1"/>
    <property type="molecule type" value="Genomic_DNA"/>
</dbReference>
<dbReference type="RefSeq" id="NP_462967.1">
    <property type="nucleotide sequence ID" value="NC_003197.2"/>
</dbReference>
<dbReference type="RefSeq" id="WP_000136806.1">
    <property type="nucleotide sequence ID" value="NC_003197.2"/>
</dbReference>
<dbReference type="SMR" id="Q8ZKP3"/>
<dbReference type="STRING" id="99287.STM4086"/>
<dbReference type="PaxDb" id="99287-STM4086"/>
<dbReference type="GeneID" id="1255613"/>
<dbReference type="KEGG" id="stm:STM4086"/>
<dbReference type="PATRIC" id="fig|99287.12.peg.4306"/>
<dbReference type="HOGENOM" id="CLU_009281_2_3_6"/>
<dbReference type="PhylomeDB" id="Q8ZKP3"/>
<dbReference type="BioCyc" id="SENT99287:STM4086-MONOMER"/>
<dbReference type="UniPathway" id="UPA00618">
    <property type="reaction ID" value="UER00672"/>
</dbReference>
<dbReference type="PHI-base" id="PHI:8128"/>
<dbReference type="Proteomes" id="UP000001014">
    <property type="component" value="Chromosome"/>
</dbReference>
<dbReference type="GO" id="GO:0005829">
    <property type="term" value="C:cytosol"/>
    <property type="evidence" value="ECO:0000318"/>
    <property type="project" value="GO_Central"/>
</dbReference>
<dbReference type="GO" id="GO:0005524">
    <property type="term" value="F:ATP binding"/>
    <property type="evidence" value="ECO:0007669"/>
    <property type="project" value="UniProtKB-UniRule"/>
</dbReference>
<dbReference type="GO" id="GO:0004370">
    <property type="term" value="F:glycerol kinase activity"/>
    <property type="evidence" value="ECO:0000250"/>
    <property type="project" value="UniProtKB"/>
</dbReference>
<dbReference type="GO" id="GO:0046872">
    <property type="term" value="F:metal ion binding"/>
    <property type="evidence" value="ECO:0007669"/>
    <property type="project" value="UniProtKB-KW"/>
</dbReference>
<dbReference type="GO" id="GO:0019563">
    <property type="term" value="P:glycerol catabolic process"/>
    <property type="evidence" value="ECO:0000318"/>
    <property type="project" value="GO_Central"/>
</dbReference>
<dbReference type="GO" id="GO:0006071">
    <property type="term" value="P:glycerol metabolic process"/>
    <property type="evidence" value="ECO:0000250"/>
    <property type="project" value="UniProtKB"/>
</dbReference>
<dbReference type="GO" id="GO:0006072">
    <property type="term" value="P:glycerol-3-phosphate metabolic process"/>
    <property type="evidence" value="ECO:0007669"/>
    <property type="project" value="InterPro"/>
</dbReference>
<dbReference type="CDD" id="cd07786">
    <property type="entry name" value="FGGY_EcGK_like"/>
    <property type="match status" value="1"/>
</dbReference>
<dbReference type="FunFam" id="3.30.420.40:FF:000007">
    <property type="entry name" value="Glycerol kinase"/>
    <property type="match status" value="1"/>
</dbReference>
<dbReference type="FunFam" id="3.30.420.40:FF:000008">
    <property type="entry name" value="Glycerol kinase"/>
    <property type="match status" value="1"/>
</dbReference>
<dbReference type="Gene3D" id="3.30.420.40">
    <property type="match status" value="2"/>
</dbReference>
<dbReference type="HAMAP" id="MF_00186">
    <property type="entry name" value="Glycerol_kin"/>
    <property type="match status" value="1"/>
</dbReference>
<dbReference type="InterPro" id="IPR043129">
    <property type="entry name" value="ATPase_NBD"/>
</dbReference>
<dbReference type="InterPro" id="IPR000577">
    <property type="entry name" value="Carb_kinase_FGGY"/>
</dbReference>
<dbReference type="InterPro" id="IPR018483">
    <property type="entry name" value="Carb_kinase_FGGY_CS"/>
</dbReference>
<dbReference type="InterPro" id="IPR018485">
    <property type="entry name" value="FGGY_C"/>
</dbReference>
<dbReference type="InterPro" id="IPR018484">
    <property type="entry name" value="FGGY_N"/>
</dbReference>
<dbReference type="InterPro" id="IPR005999">
    <property type="entry name" value="Glycerol_kin"/>
</dbReference>
<dbReference type="NCBIfam" id="TIGR01311">
    <property type="entry name" value="glycerol_kin"/>
    <property type="match status" value="1"/>
</dbReference>
<dbReference type="NCBIfam" id="NF000756">
    <property type="entry name" value="PRK00047.1"/>
    <property type="match status" value="1"/>
</dbReference>
<dbReference type="PANTHER" id="PTHR10196:SF69">
    <property type="entry name" value="GLYCEROL KINASE"/>
    <property type="match status" value="1"/>
</dbReference>
<dbReference type="PANTHER" id="PTHR10196">
    <property type="entry name" value="SUGAR KINASE"/>
    <property type="match status" value="1"/>
</dbReference>
<dbReference type="Pfam" id="PF02782">
    <property type="entry name" value="FGGY_C"/>
    <property type="match status" value="1"/>
</dbReference>
<dbReference type="Pfam" id="PF00370">
    <property type="entry name" value="FGGY_N"/>
    <property type="match status" value="1"/>
</dbReference>
<dbReference type="PIRSF" id="PIRSF000538">
    <property type="entry name" value="GlpK"/>
    <property type="match status" value="1"/>
</dbReference>
<dbReference type="SUPFAM" id="SSF53067">
    <property type="entry name" value="Actin-like ATPase domain"/>
    <property type="match status" value="2"/>
</dbReference>
<dbReference type="PROSITE" id="PS00933">
    <property type="entry name" value="FGGY_KINASES_1"/>
    <property type="match status" value="1"/>
</dbReference>
<dbReference type="PROSITE" id="PS00445">
    <property type="entry name" value="FGGY_KINASES_2"/>
    <property type="match status" value="1"/>
</dbReference>
<gene>
    <name evidence="2" type="primary">glpK</name>
    <name type="ordered locus">STM4086</name>
</gene>
<proteinExistence type="inferred from homology"/>
<protein>
    <recommendedName>
        <fullName evidence="2">Glycerol kinase</fullName>
        <ecNumber evidence="2">2.7.1.30</ecNumber>
    </recommendedName>
    <alternativeName>
        <fullName evidence="2">ATP:glycerol 3-phosphotransferase</fullName>
    </alternativeName>
    <alternativeName>
        <fullName evidence="2">Glycerokinase</fullName>
        <shortName evidence="2">GK</shortName>
    </alternativeName>
</protein>
<accession>Q8ZKP3</accession>
<feature type="initiator methionine" description="Removed" evidence="1">
    <location>
        <position position="1"/>
    </location>
</feature>
<feature type="chain" id="PRO_0000059486" description="Glycerol kinase">
    <location>
        <begin position="2"/>
        <end position="502"/>
    </location>
</feature>
<feature type="binding site" evidence="2">
    <location>
        <position position="14"/>
    </location>
    <ligand>
        <name>ADP</name>
        <dbReference type="ChEBI" id="CHEBI:456216"/>
    </ligand>
</feature>
<feature type="binding site" evidence="2">
    <location>
        <position position="14"/>
    </location>
    <ligand>
        <name>ATP</name>
        <dbReference type="ChEBI" id="CHEBI:30616"/>
    </ligand>
</feature>
<feature type="binding site" evidence="2">
    <location>
        <position position="14"/>
    </location>
    <ligand>
        <name>sn-glycerol 3-phosphate</name>
        <dbReference type="ChEBI" id="CHEBI:57597"/>
    </ligand>
</feature>
<feature type="binding site" evidence="2">
    <location>
        <position position="15"/>
    </location>
    <ligand>
        <name>ATP</name>
        <dbReference type="ChEBI" id="CHEBI:30616"/>
    </ligand>
</feature>
<feature type="binding site" evidence="2">
    <location>
        <position position="16"/>
    </location>
    <ligand>
        <name>ATP</name>
        <dbReference type="ChEBI" id="CHEBI:30616"/>
    </ligand>
</feature>
<feature type="binding site" evidence="2">
    <location>
        <position position="18"/>
    </location>
    <ligand>
        <name>ADP</name>
        <dbReference type="ChEBI" id="CHEBI:456216"/>
    </ligand>
</feature>
<feature type="binding site" evidence="2">
    <location>
        <position position="84"/>
    </location>
    <ligand>
        <name>glycerol</name>
        <dbReference type="ChEBI" id="CHEBI:17754"/>
    </ligand>
</feature>
<feature type="binding site" evidence="2">
    <location>
        <position position="84"/>
    </location>
    <ligand>
        <name>sn-glycerol 3-phosphate</name>
        <dbReference type="ChEBI" id="CHEBI:57597"/>
    </ligand>
</feature>
<feature type="binding site" evidence="2">
    <location>
        <position position="85"/>
    </location>
    <ligand>
        <name>glycerol</name>
        <dbReference type="ChEBI" id="CHEBI:17754"/>
    </ligand>
</feature>
<feature type="binding site" evidence="2">
    <location>
        <position position="85"/>
    </location>
    <ligand>
        <name>sn-glycerol 3-phosphate</name>
        <dbReference type="ChEBI" id="CHEBI:57597"/>
    </ligand>
</feature>
<feature type="binding site" evidence="2">
    <location>
        <position position="136"/>
    </location>
    <ligand>
        <name>glycerol</name>
        <dbReference type="ChEBI" id="CHEBI:17754"/>
    </ligand>
</feature>
<feature type="binding site" evidence="2">
    <location>
        <position position="136"/>
    </location>
    <ligand>
        <name>sn-glycerol 3-phosphate</name>
        <dbReference type="ChEBI" id="CHEBI:57597"/>
    </ligand>
</feature>
<feature type="binding site" evidence="2">
    <location>
        <position position="246"/>
    </location>
    <ligand>
        <name>glycerol</name>
        <dbReference type="ChEBI" id="CHEBI:17754"/>
    </ligand>
</feature>
<feature type="binding site" evidence="2">
    <location>
        <position position="246"/>
    </location>
    <ligand>
        <name>sn-glycerol 3-phosphate</name>
        <dbReference type="ChEBI" id="CHEBI:57597"/>
    </ligand>
</feature>
<feature type="binding site" evidence="2">
    <location>
        <position position="247"/>
    </location>
    <ligand>
        <name>glycerol</name>
        <dbReference type="ChEBI" id="CHEBI:17754"/>
    </ligand>
</feature>
<feature type="binding site" evidence="2">
    <location>
        <position position="268"/>
    </location>
    <ligand>
        <name>ADP</name>
        <dbReference type="ChEBI" id="CHEBI:456216"/>
    </ligand>
</feature>
<feature type="binding site" evidence="2">
    <location>
        <position position="268"/>
    </location>
    <ligand>
        <name>ATP</name>
        <dbReference type="ChEBI" id="CHEBI:30616"/>
    </ligand>
</feature>
<feature type="binding site" evidence="2">
    <location>
        <position position="311"/>
    </location>
    <ligand>
        <name>ADP</name>
        <dbReference type="ChEBI" id="CHEBI:456216"/>
    </ligand>
</feature>
<feature type="binding site" evidence="2">
    <location>
        <position position="311"/>
    </location>
    <ligand>
        <name>ATP</name>
        <dbReference type="ChEBI" id="CHEBI:30616"/>
    </ligand>
</feature>
<feature type="binding site" evidence="2">
    <location>
        <position position="315"/>
    </location>
    <ligand>
        <name>ATP</name>
        <dbReference type="ChEBI" id="CHEBI:30616"/>
    </ligand>
</feature>
<feature type="binding site" evidence="2">
    <location>
        <position position="412"/>
    </location>
    <ligand>
        <name>ADP</name>
        <dbReference type="ChEBI" id="CHEBI:456216"/>
    </ligand>
</feature>
<feature type="binding site" evidence="2">
    <location>
        <position position="412"/>
    </location>
    <ligand>
        <name>ATP</name>
        <dbReference type="ChEBI" id="CHEBI:30616"/>
    </ligand>
</feature>
<feature type="binding site" evidence="2">
    <location>
        <position position="416"/>
    </location>
    <ligand>
        <name>ADP</name>
        <dbReference type="ChEBI" id="CHEBI:456216"/>
    </ligand>
</feature>
<comment type="function">
    <text evidence="2">Key enzyme in the regulation of glycerol uptake and metabolism. Catalyzes the phosphorylation of glycerol to yield sn-glycerol 3-phosphate.</text>
</comment>
<comment type="catalytic activity">
    <reaction evidence="2">
        <text>glycerol + ATP = sn-glycerol 3-phosphate + ADP + H(+)</text>
        <dbReference type="Rhea" id="RHEA:21644"/>
        <dbReference type="ChEBI" id="CHEBI:15378"/>
        <dbReference type="ChEBI" id="CHEBI:17754"/>
        <dbReference type="ChEBI" id="CHEBI:30616"/>
        <dbReference type="ChEBI" id="CHEBI:57597"/>
        <dbReference type="ChEBI" id="CHEBI:456216"/>
        <dbReference type="EC" id="2.7.1.30"/>
    </reaction>
</comment>
<comment type="activity regulation">
    <text evidence="2">Activity of this regulatory enzyme is affected by several metabolites. Allosterically and non-competitively inhibited by fructose 1,6-bisphosphate (FBP) and unphosphorylated phosphocarrier protein EIIA-Glc (III-Glc), an integral component of the bacterial phosphotransferase (PTS) system.</text>
</comment>
<comment type="pathway">
    <text evidence="2">Polyol metabolism; glycerol degradation via glycerol kinase pathway; sn-glycerol 3-phosphate from glycerol: step 1/1.</text>
</comment>
<comment type="subunit">
    <text evidence="2">Homotetramer and homodimer (in equilibrium). Heterodimer with EIIA-Glc. Binds 1 zinc ion per glycerol kinase EIIA-Glc dimer. The zinc ion is important for dimerization.</text>
</comment>
<comment type="similarity">
    <text evidence="2">Belongs to the FGGY kinase family.</text>
</comment>
<sequence length="502" mass="56064">MTEKKYIVALDQGTTSSRAVVMDHDANIVSVSQREFEQIYPKPGWVEHDPMEIWASQSSTLVEVLAKADISSDQIAAIGITNQRETAIVWERETGKPIYNAIVWQCRRTADICEQLKRDGLEDYIRDNTGLVVDPYFSGTKVKWILDHVEGSRERAKRGELLFGTVDTWLIWKMTQGRVHVTDYTNASRTMLFNIHDLDWDDKMLDVLDIPRAMLPQVRKSSEVYGQTNIGGKGGTRIPIAGIAGDQQAALFGQLCVKEGMAKNTYGTGCFMLMNTGEKAVKSENGLLITIACGPSGEVNYALEGAVFMAGASIQWLRDEMKLISDAFDSEYFATKVKDTNGVYVVPAFTGLGAPYWDPYARGAIFGLTRGVNSNHIIRATLESIAYQTRDVLEAMQADSGIRLHALRVDGGAVANNFLMQFQSDILGTRVERPEVREVTALGAAYLAGLAVGYWQNLDELQEKAVIEREFRPGIETTERNYRYSGWKKAVKRAMAWEEHDK</sequence>
<evidence type="ECO:0000250" key="1"/>
<evidence type="ECO:0000255" key="2">
    <source>
        <dbReference type="HAMAP-Rule" id="MF_00186"/>
    </source>
</evidence>
<name>GLPK_SALTY</name>
<organism>
    <name type="scientific">Salmonella typhimurium (strain LT2 / SGSC1412 / ATCC 700720)</name>
    <dbReference type="NCBI Taxonomy" id="99287"/>
    <lineage>
        <taxon>Bacteria</taxon>
        <taxon>Pseudomonadati</taxon>
        <taxon>Pseudomonadota</taxon>
        <taxon>Gammaproteobacteria</taxon>
        <taxon>Enterobacterales</taxon>
        <taxon>Enterobacteriaceae</taxon>
        <taxon>Salmonella</taxon>
    </lineage>
</organism>
<reference key="1">
    <citation type="journal article" date="2001" name="Nature">
        <title>Complete genome sequence of Salmonella enterica serovar Typhimurium LT2.</title>
        <authorList>
            <person name="McClelland M."/>
            <person name="Sanderson K.E."/>
            <person name="Spieth J."/>
            <person name="Clifton S.W."/>
            <person name="Latreille P."/>
            <person name="Courtney L."/>
            <person name="Porwollik S."/>
            <person name="Ali J."/>
            <person name="Dante M."/>
            <person name="Du F."/>
            <person name="Hou S."/>
            <person name="Layman D."/>
            <person name="Leonard S."/>
            <person name="Nguyen C."/>
            <person name="Scott K."/>
            <person name="Holmes A."/>
            <person name="Grewal N."/>
            <person name="Mulvaney E."/>
            <person name="Ryan E."/>
            <person name="Sun H."/>
            <person name="Florea L."/>
            <person name="Miller W."/>
            <person name="Stoneking T."/>
            <person name="Nhan M."/>
            <person name="Waterston R."/>
            <person name="Wilson R.K."/>
        </authorList>
    </citation>
    <scope>NUCLEOTIDE SEQUENCE [LARGE SCALE GENOMIC DNA]</scope>
    <source>
        <strain>LT2 / SGSC1412 / ATCC 700720</strain>
    </source>
</reference>
<keyword id="KW-0021">Allosteric enzyme</keyword>
<keyword id="KW-0067">ATP-binding</keyword>
<keyword id="KW-0319">Glycerol metabolism</keyword>
<keyword id="KW-0418">Kinase</keyword>
<keyword id="KW-0479">Metal-binding</keyword>
<keyword id="KW-0547">Nucleotide-binding</keyword>
<keyword id="KW-1185">Reference proteome</keyword>
<keyword id="KW-0808">Transferase</keyword>
<keyword id="KW-0862">Zinc</keyword>